<evidence type="ECO:0000255" key="1">
    <source>
        <dbReference type="HAMAP-Rule" id="MF_00144"/>
    </source>
</evidence>
<protein>
    <recommendedName>
        <fullName evidence="1">tRNA-specific 2-thiouridylase MnmA</fullName>
        <ecNumber evidence="1">2.8.1.13</ecNumber>
    </recommendedName>
</protein>
<organism>
    <name type="scientific">Bartonella quintana (strain Toulouse)</name>
    <name type="common">Rochalimaea quintana</name>
    <dbReference type="NCBI Taxonomy" id="283165"/>
    <lineage>
        <taxon>Bacteria</taxon>
        <taxon>Pseudomonadati</taxon>
        <taxon>Pseudomonadota</taxon>
        <taxon>Alphaproteobacteria</taxon>
        <taxon>Hyphomicrobiales</taxon>
        <taxon>Bartonellaceae</taxon>
        <taxon>Bartonella</taxon>
    </lineage>
</organism>
<name>MNMA_BARQU</name>
<accession>Q6FZ46</accession>
<dbReference type="EC" id="2.8.1.13" evidence="1"/>
<dbReference type="EMBL" id="BX897700">
    <property type="protein sequence ID" value="CAF26420.1"/>
    <property type="molecule type" value="Genomic_DNA"/>
</dbReference>
<dbReference type="RefSeq" id="WP_011179648.1">
    <property type="nucleotide sequence ID" value="NC_005955.1"/>
</dbReference>
<dbReference type="SMR" id="Q6FZ46"/>
<dbReference type="KEGG" id="bqu:BQ09430"/>
<dbReference type="eggNOG" id="COG0482">
    <property type="taxonomic scope" value="Bacteria"/>
</dbReference>
<dbReference type="HOGENOM" id="CLU_035188_0_1_5"/>
<dbReference type="OrthoDB" id="9800696at2"/>
<dbReference type="Proteomes" id="UP000000597">
    <property type="component" value="Chromosome"/>
</dbReference>
<dbReference type="GO" id="GO:0005737">
    <property type="term" value="C:cytoplasm"/>
    <property type="evidence" value="ECO:0007669"/>
    <property type="project" value="UniProtKB-SubCell"/>
</dbReference>
<dbReference type="GO" id="GO:0005524">
    <property type="term" value="F:ATP binding"/>
    <property type="evidence" value="ECO:0007669"/>
    <property type="project" value="UniProtKB-KW"/>
</dbReference>
<dbReference type="GO" id="GO:0000049">
    <property type="term" value="F:tRNA binding"/>
    <property type="evidence" value="ECO:0007669"/>
    <property type="project" value="UniProtKB-KW"/>
</dbReference>
<dbReference type="GO" id="GO:0103016">
    <property type="term" value="F:tRNA-uridine 2-sulfurtransferase activity"/>
    <property type="evidence" value="ECO:0007669"/>
    <property type="project" value="UniProtKB-EC"/>
</dbReference>
<dbReference type="GO" id="GO:0002143">
    <property type="term" value="P:tRNA wobble position uridine thiolation"/>
    <property type="evidence" value="ECO:0007669"/>
    <property type="project" value="TreeGrafter"/>
</dbReference>
<dbReference type="CDD" id="cd01998">
    <property type="entry name" value="MnmA_TRMU-like"/>
    <property type="match status" value="1"/>
</dbReference>
<dbReference type="FunFam" id="2.30.30.280:FF:000001">
    <property type="entry name" value="tRNA-specific 2-thiouridylase MnmA"/>
    <property type="match status" value="1"/>
</dbReference>
<dbReference type="FunFam" id="3.40.50.620:FF:000115">
    <property type="entry name" value="tRNA-specific 2-thiouridylase MnmA"/>
    <property type="match status" value="1"/>
</dbReference>
<dbReference type="Gene3D" id="2.30.30.280">
    <property type="entry name" value="Adenine nucleotide alpha hydrolases-like domains"/>
    <property type="match status" value="1"/>
</dbReference>
<dbReference type="Gene3D" id="3.40.50.620">
    <property type="entry name" value="HUPs"/>
    <property type="match status" value="1"/>
</dbReference>
<dbReference type="Gene3D" id="2.40.30.10">
    <property type="entry name" value="Translation factors"/>
    <property type="match status" value="1"/>
</dbReference>
<dbReference type="HAMAP" id="MF_00144">
    <property type="entry name" value="tRNA_thiouridyl_MnmA"/>
    <property type="match status" value="1"/>
</dbReference>
<dbReference type="InterPro" id="IPR004506">
    <property type="entry name" value="MnmA-like"/>
</dbReference>
<dbReference type="InterPro" id="IPR046885">
    <property type="entry name" value="MnmA-like_C"/>
</dbReference>
<dbReference type="InterPro" id="IPR046884">
    <property type="entry name" value="MnmA-like_central"/>
</dbReference>
<dbReference type="InterPro" id="IPR023382">
    <property type="entry name" value="MnmA-like_central_sf"/>
</dbReference>
<dbReference type="InterPro" id="IPR014729">
    <property type="entry name" value="Rossmann-like_a/b/a_fold"/>
</dbReference>
<dbReference type="NCBIfam" id="NF001138">
    <property type="entry name" value="PRK00143.1"/>
    <property type="match status" value="1"/>
</dbReference>
<dbReference type="NCBIfam" id="TIGR00420">
    <property type="entry name" value="trmU"/>
    <property type="match status" value="1"/>
</dbReference>
<dbReference type="PANTHER" id="PTHR11933:SF5">
    <property type="entry name" value="MITOCHONDRIAL TRNA-SPECIFIC 2-THIOURIDYLASE 1"/>
    <property type="match status" value="1"/>
</dbReference>
<dbReference type="PANTHER" id="PTHR11933">
    <property type="entry name" value="TRNA 5-METHYLAMINOMETHYL-2-THIOURIDYLATE -METHYLTRANSFERASE"/>
    <property type="match status" value="1"/>
</dbReference>
<dbReference type="Pfam" id="PF03054">
    <property type="entry name" value="tRNA_Me_trans"/>
    <property type="match status" value="1"/>
</dbReference>
<dbReference type="Pfam" id="PF20258">
    <property type="entry name" value="tRNA_Me_trans_C"/>
    <property type="match status" value="1"/>
</dbReference>
<dbReference type="Pfam" id="PF20259">
    <property type="entry name" value="tRNA_Me_trans_M"/>
    <property type="match status" value="1"/>
</dbReference>
<dbReference type="SUPFAM" id="SSF52402">
    <property type="entry name" value="Adenine nucleotide alpha hydrolases-like"/>
    <property type="match status" value="1"/>
</dbReference>
<reference key="1">
    <citation type="journal article" date="2004" name="Proc. Natl. Acad. Sci. U.S.A.">
        <title>The louse-borne human pathogen Bartonella quintana is a genomic derivative of the zoonotic agent Bartonella henselae.</title>
        <authorList>
            <person name="Alsmark U.C.M."/>
            <person name="Frank A.C."/>
            <person name="Karlberg E.O."/>
            <person name="Legault B.-A."/>
            <person name="Ardell D.H."/>
            <person name="Canbaeck B."/>
            <person name="Eriksson A.-S."/>
            <person name="Naeslund A.K."/>
            <person name="Handley S.A."/>
            <person name="Huvet M."/>
            <person name="La Scola B."/>
            <person name="Holmberg M."/>
            <person name="Andersson S.G.E."/>
        </authorList>
    </citation>
    <scope>NUCLEOTIDE SEQUENCE [LARGE SCALE GENOMIC DNA]</scope>
    <source>
        <strain>Toulouse</strain>
    </source>
</reference>
<comment type="function">
    <text evidence="1">Catalyzes the 2-thiolation of uridine at the wobble position (U34) of tRNA, leading to the formation of s(2)U34.</text>
</comment>
<comment type="catalytic activity">
    <reaction evidence="1">
        <text>S-sulfanyl-L-cysteinyl-[protein] + uridine(34) in tRNA + AH2 + ATP = 2-thiouridine(34) in tRNA + L-cysteinyl-[protein] + A + AMP + diphosphate + H(+)</text>
        <dbReference type="Rhea" id="RHEA:47032"/>
        <dbReference type="Rhea" id="RHEA-COMP:10131"/>
        <dbReference type="Rhea" id="RHEA-COMP:11726"/>
        <dbReference type="Rhea" id="RHEA-COMP:11727"/>
        <dbReference type="Rhea" id="RHEA-COMP:11728"/>
        <dbReference type="ChEBI" id="CHEBI:13193"/>
        <dbReference type="ChEBI" id="CHEBI:15378"/>
        <dbReference type="ChEBI" id="CHEBI:17499"/>
        <dbReference type="ChEBI" id="CHEBI:29950"/>
        <dbReference type="ChEBI" id="CHEBI:30616"/>
        <dbReference type="ChEBI" id="CHEBI:33019"/>
        <dbReference type="ChEBI" id="CHEBI:61963"/>
        <dbReference type="ChEBI" id="CHEBI:65315"/>
        <dbReference type="ChEBI" id="CHEBI:87170"/>
        <dbReference type="ChEBI" id="CHEBI:456215"/>
        <dbReference type="EC" id="2.8.1.13"/>
    </reaction>
</comment>
<comment type="subcellular location">
    <subcellularLocation>
        <location evidence="1">Cytoplasm</location>
    </subcellularLocation>
</comment>
<comment type="similarity">
    <text evidence="1">Belongs to the MnmA/TRMU family.</text>
</comment>
<sequence length="408" mass="44791">MFLNSLDLPGQPDNSRIVVAMSGGVDSSVVAGLLKKEGYDVIGITLQLYDHGAATHRVGACCAGQDIEDARRVAETLGIPHYVLDYEKRFREAVIDPFAESYAHGETPVPCVACNQTVKFADLLATARELGADALATGHYIRSRPHGAHRALFRPFDVERDQSYFLFATTQEQIDYLRFPLGDLPKAHVREIATEMGFVVADKHDSQDICFVPQGKYSDVITKLRPEAVNPGVIVHIDGQVLGKHSGIVNYTVGQRRGIGVATGEALYVVYLDVENARVIVGPREMLETHKLFLRDVNWLGDERLDNFPSDGLEMAVKVRSTRPSHLARLHYQEGVFSVDFLECENSVAPGQACVFYDGNGDGARILGGGFVTHSQRAVGVEMMLRRVLCNPETKAAVSSEFKTTASK</sequence>
<gene>
    <name evidence="1" type="primary">mnmA</name>
    <name type="ordered locus">BQ09430</name>
</gene>
<keyword id="KW-0067">ATP-binding</keyword>
<keyword id="KW-0963">Cytoplasm</keyword>
<keyword id="KW-1015">Disulfide bond</keyword>
<keyword id="KW-0547">Nucleotide-binding</keyword>
<keyword id="KW-0694">RNA-binding</keyword>
<keyword id="KW-0808">Transferase</keyword>
<keyword id="KW-0819">tRNA processing</keyword>
<keyword id="KW-0820">tRNA-binding</keyword>
<feature type="chain" id="PRO_0000349534" description="tRNA-specific 2-thiouridylase MnmA">
    <location>
        <begin position="1"/>
        <end position="408"/>
    </location>
</feature>
<feature type="region of interest" description="Interaction with tRNA" evidence="1">
    <location>
        <begin position="160"/>
        <end position="162"/>
    </location>
</feature>
<feature type="active site" description="Nucleophile" evidence="1">
    <location>
        <position position="114"/>
    </location>
</feature>
<feature type="active site" description="Cysteine persulfide intermediate" evidence="1">
    <location>
        <position position="210"/>
    </location>
</feature>
<feature type="binding site" evidence="1">
    <location>
        <begin position="20"/>
        <end position="27"/>
    </location>
    <ligand>
        <name>ATP</name>
        <dbReference type="ChEBI" id="CHEBI:30616"/>
    </ligand>
</feature>
<feature type="binding site" evidence="1">
    <location>
        <position position="46"/>
    </location>
    <ligand>
        <name>ATP</name>
        <dbReference type="ChEBI" id="CHEBI:30616"/>
    </ligand>
</feature>
<feature type="binding site" evidence="1">
    <location>
        <position position="138"/>
    </location>
    <ligand>
        <name>ATP</name>
        <dbReference type="ChEBI" id="CHEBI:30616"/>
    </ligand>
</feature>
<feature type="site" description="Interaction with tRNA" evidence="1">
    <location>
        <position position="139"/>
    </location>
</feature>
<feature type="site" description="Interaction with tRNA" evidence="1">
    <location>
        <position position="352"/>
    </location>
</feature>
<feature type="disulfide bond" description="Alternate" evidence="1">
    <location>
        <begin position="114"/>
        <end position="210"/>
    </location>
</feature>
<proteinExistence type="inferred from homology"/>